<feature type="chain" id="PRO_1000143518" description="ATP synthase subunit beta">
    <location>
        <begin position="1"/>
        <end position="488"/>
    </location>
</feature>
<feature type="region of interest" description="Disordered" evidence="2">
    <location>
        <begin position="467"/>
        <end position="488"/>
    </location>
</feature>
<feature type="binding site" evidence="1">
    <location>
        <begin position="155"/>
        <end position="162"/>
    </location>
    <ligand>
        <name>ATP</name>
        <dbReference type="ChEBI" id="CHEBI:30616"/>
    </ligand>
</feature>
<keyword id="KW-0066">ATP synthesis</keyword>
<keyword id="KW-0067">ATP-binding</keyword>
<keyword id="KW-1003">Cell membrane</keyword>
<keyword id="KW-0139">CF(1)</keyword>
<keyword id="KW-0375">Hydrogen ion transport</keyword>
<keyword id="KW-0406">Ion transport</keyword>
<keyword id="KW-0472">Membrane</keyword>
<keyword id="KW-0547">Nucleotide-binding</keyword>
<keyword id="KW-1278">Translocase</keyword>
<keyword id="KW-0813">Transport</keyword>
<protein>
    <recommendedName>
        <fullName evidence="1">ATP synthase subunit beta</fullName>
        <ecNumber evidence="1">7.1.2.2</ecNumber>
    </recommendedName>
    <alternativeName>
        <fullName evidence="1">ATP synthase F1 sector subunit beta</fullName>
    </alternativeName>
    <alternativeName>
        <fullName evidence="1">F-ATPase subunit beta</fullName>
    </alternativeName>
</protein>
<proteinExistence type="inferred from homology"/>
<evidence type="ECO:0000255" key="1">
    <source>
        <dbReference type="HAMAP-Rule" id="MF_01347"/>
    </source>
</evidence>
<evidence type="ECO:0000256" key="2">
    <source>
        <dbReference type="SAM" id="MobiDB-lite"/>
    </source>
</evidence>
<organism>
    <name type="scientific">Lacticaseibacillus casei (strain BL23)</name>
    <name type="common">Lactobacillus casei</name>
    <dbReference type="NCBI Taxonomy" id="543734"/>
    <lineage>
        <taxon>Bacteria</taxon>
        <taxon>Bacillati</taxon>
        <taxon>Bacillota</taxon>
        <taxon>Bacilli</taxon>
        <taxon>Lactobacillales</taxon>
        <taxon>Lactobacillaceae</taxon>
        <taxon>Lacticaseibacillus</taxon>
    </lineage>
</organism>
<reference key="1">
    <citation type="submission" date="2008-06" db="EMBL/GenBank/DDBJ databases">
        <title>Lactobacillus casei BL23 complete genome sequence.</title>
        <authorList>
            <person name="Maze A."/>
            <person name="Boel G."/>
            <person name="Bourand A."/>
            <person name="Loux V."/>
            <person name="Gibrat J.F."/>
            <person name="Zuniga M."/>
            <person name="Hartke A."/>
            <person name="Deutscher J."/>
        </authorList>
    </citation>
    <scope>NUCLEOTIDE SEQUENCE [LARGE SCALE GENOMIC DNA]</scope>
    <source>
        <strain>BL23</strain>
    </source>
</reference>
<gene>
    <name evidence="1" type="primary">atpD</name>
    <name type="ordered locus">LCABL_13880</name>
</gene>
<sequence>MPNSTGKIAQVIGPVVDVAFPINGDLPEINNALTVAKKDGSQLVLEVALELGDGVMRTIAMDSTDGLQRNMAVQDTGGPISVPVGKDTLGRVFNVLGDPIDGGEAFGPDHRRDSIHRDAPKFEDLNTSSEILETGIKVIDLLEPYLRGGKVGLFGGAGVGKTVLIQELIHNIAEEHGGISVFTGVGERTREGNDLYFEMKESGVLENTAMVFGQMNEPPGARMRVALTGLTIAEYFRDVEGQDVLLFIDNIFRFTQAGSEVSALLGRIPSAVGYQPTLATEMGQLQERITSTKKGSVTSIQAIYVPADDYTDPAPATTFAHLDATTNLERRLTEQGIYPAVDPLESSSSALTPEIVGDEHYKVATEVQQVLQRYRELQDIISILGMDELSDEEKVVVARARRIQFFLSQNFNVAERFTGQPGSYVPVEETVKGFKAILDGKYDDYPEDAFRSVGRIEEVVEKAKKMGFAPDDQNTDADEKPAAQAAAN</sequence>
<comment type="function">
    <text evidence="1">Produces ATP from ADP in the presence of a proton gradient across the membrane. The catalytic sites are hosted primarily by the beta subunits.</text>
</comment>
<comment type="catalytic activity">
    <reaction evidence="1">
        <text>ATP + H2O + 4 H(+)(in) = ADP + phosphate + 5 H(+)(out)</text>
        <dbReference type="Rhea" id="RHEA:57720"/>
        <dbReference type="ChEBI" id="CHEBI:15377"/>
        <dbReference type="ChEBI" id="CHEBI:15378"/>
        <dbReference type="ChEBI" id="CHEBI:30616"/>
        <dbReference type="ChEBI" id="CHEBI:43474"/>
        <dbReference type="ChEBI" id="CHEBI:456216"/>
        <dbReference type="EC" id="7.1.2.2"/>
    </reaction>
</comment>
<comment type="subunit">
    <text evidence="1">F-type ATPases have 2 components, CF(1) - the catalytic core - and CF(0) - the membrane proton channel. CF(1) has five subunits: alpha(3), beta(3), gamma(1), delta(1), epsilon(1). CF(0) has three main subunits: a(1), b(2) and c(9-12). The alpha and beta chains form an alternating ring which encloses part of the gamma chain. CF(1) is attached to CF(0) by a central stalk formed by the gamma and epsilon chains, while a peripheral stalk is formed by the delta and b chains.</text>
</comment>
<comment type="subcellular location">
    <subcellularLocation>
        <location evidence="1">Cell membrane</location>
        <topology evidence="1">Peripheral membrane protein</topology>
    </subcellularLocation>
</comment>
<comment type="similarity">
    <text evidence="1">Belongs to the ATPase alpha/beta chains family.</text>
</comment>
<name>ATPB_LACCB</name>
<dbReference type="EC" id="7.1.2.2" evidence="1"/>
<dbReference type="EMBL" id="FM177140">
    <property type="protein sequence ID" value="CAQ66469.1"/>
    <property type="molecule type" value="Genomic_DNA"/>
</dbReference>
<dbReference type="SMR" id="B3WDL8"/>
<dbReference type="KEGG" id="lcb:LCABL_13880"/>
<dbReference type="HOGENOM" id="CLU_022398_0_2_9"/>
<dbReference type="GO" id="GO:0005886">
    <property type="term" value="C:plasma membrane"/>
    <property type="evidence" value="ECO:0007669"/>
    <property type="project" value="UniProtKB-SubCell"/>
</dbReference>
<dbReference type="GO" id="GO:0045259">
    <property type="term" value="C:proton-transporting ATP synthase complex"/>
    <property type="evidence" value="ECO:0007669"/>
    <property type="project" value="UniProtKB-KW"/>
</dbReference>
<dbReference type="GO" id="GO:0005524">
    <property type="term" value="F:ATP binding"/>
    <property type="evidence" value="ECO:0007669"/>
    <property type="project" value="UniProtKB-UniRule"/>
</dbReference>
<dbReference type="GO" id="GO:0016887">
    <property type="term" value="F:ATP hydrolysis activity"/>
    <property type="evidence" value="ECO:0007669"/>
    <property type="project" value="InterPro"/>
</dbReference>
<dbReference type="GO" id="GO:0046933">
    <property type="term" value="F:proton-transporting ATP synthase activity, rotational mechanism"/>
    <property type="evidence" value="ECO:0007669"/>
    <property type="project" value="UniProtKB-UniRule"/>
</dbReference>
<dbReference type="CDD" id="cd18110">
    <property type="entry name" value="ATP-synt_F1_beta_C"/>
    <property type="match status" value="1"/>
</dbReference>
<dbReference type="CDD" id="cd18115">
    <property type="entry name" value="ATP-synt_F1_beta_N"/>
    <property type="match status" value="1"/>
</dbReference>
<dbReference type="CDD" id="cd01133">
    <property type="entry name" value="F1-ATPase_beta_CD"/>
    <property type="match status" value="1"/>
</dbReference>
<dbReference type="FunFam" id="1.10.1140.10:FF:000001">
    <property type="entry name" value="ATP synthase subunit beta"/>
    <property type="match status" value="1"/>
</dbReference>
<dbReference type="FunFam" id="2.40.10.170:FF:000005">
    <property type="entry name" value="ATP synthase subunit beta"/>
    <property type="match status" value="1"/>
</dbReference>
<dbReference type="FunFam" id="3.40.50.300:FF:000004">
    <property type="entry name" value="ATP synthase subunit beta"/>
    <property type="match status" value="1"/>
</dbReference>
<dbReference type="Gene3D" id="2.40.10.170">
    <property type="match status" value="1"/>
</dbReference>
<dbReference type="Gene3D" id="1.10.1140.10">
    <property type="entry name" value="Bovine Mitochondrial F1-atpase, Atp Synthase Beta Chain, Chain D, domain 3"/>
    <property type="match status" value="1"/>
</dbReference>
<dbReference type="Gene3D" id="3.40.50.300">
    <property type="entry name" value="P-loop containing nucleotide triphosphate hydrolases"/>
    <property type="match status" value="1"/>
</dbReference>
<dbReference type="HAMAP" id="MF_01347">
    <property type="entry name" value="ATP_synth_beta_bact"/>
    <property type="match status" value="1"/>
</dbReference>
<dbReference type="InterPro" id="IPR003593">
    <property type="entry name" value="AAA+_ATPase"/>
</dbReference>
<dbReference type="InterPro" id="IPR055190">
    <property type="entry name" value="ATP-synt_VA_C"/>
</dbReference>
<dbReference type="InterPro" id="IPR005722">
    <property type="entry name" value="ATP_synth_F1_bsu"/>
</dbReference>
<dbReference type="InterPro" id="IPR020003">
    <property type="entry name" value="ATPase_a/bsu_AS"/>
</dbReference>
<dbReference type="InterPro" id="IPR050053">
    <property type="entry name" value="ATPase_alpha/beta_chains"/>
</dbReference>
<dbReference type="InterPro" id="IPR004100">
    <property type="entry name" value="ATPase_F1/V1/A1_a/bsu_N"/>
</dbReference>
<dbReference type="InterPro" id="IPR036121">
    <property type="entry name" value="ATPase_F1/V1/A1_a/bsu_N_sf"/>
</dbReference>
<dbReference type="InterPro" id="IPR000194">
    <property type="entry name" value="ATPase_F1/V1/A1_a/bsu_nucl-bd"/>
</dbReference>
<dbReference type="InterPro" id="IPR024034">
    <property type="entry name" value="ATPase_F1/V1_b/a_C"/>
</dbReference>
<dbReference type="InterPro" id="IPR027417">
    <property type="entry name" value="P-loop_NTPase"/>
</dbReference>
<dbReference type="NCBIfam" id="TIGR01039">
    <property type="entry name" value="atpD"/>
    <property type="match status" value="1"/>
</dbReference>
<dbReference type="PANTHER" id="PTHR15184">
    <property type="entry name" value="ATP SYNTHASE"/>
    <property type="match status" value="1"/>
</dbReference>
<dbReference type="PANTHER" id="PTHR15184:SF71">
    <property type="entry name" value="ATP SYNTHASE SUBUNIT BETA, MITOCHONDRIAL"/>
    <property type="match status" value="1"/>
</dbReference>
<dbReference type="Pfam" id="PF00006">
    <property type="entry name" value="ATP-synt_ab"/>
    <property type="match status" value="1"/>
</dbReference>
<dbReference type="Pfam" id="PF02874">
    <property type="entry name" value="ATP-synt_ab_N"/>
    <property type="match status" value="1"/>
</dbReference>
<dbReference type="Pfam" id="PF22919">
    <property type="entry name" value="ATP-synt_VA_C"/>
    <property type="match status" value="1"/>
</dbReference>
<dbReference type="SMART" id="SM00382">
    <property type="entry name" value="AAA"/>
    <property type="match status" value="1"/>
</dbReference>
<dbReference type="SUPFAM" id="SSF47917">
    <property type="entry name" value="C-terminal domain of alpha and beta subunits of F1 ATP synthase"/>
    <property type="match status" value="1"/>
</dbReference>
<dbReference type="SUPFAM" id="SSF50615">
    <property type="entry name" value="N-terminal domain of alpha and beta subunits of F1 ATP synthase"/>
    <property type="match status" value="1"/>
</dbReference>
<dbReference type="SUPFAM" id="SSF52540">
    <property type="entry name" value="P-loop containing nucleoside triphosphate hydrolases"/>
    <property type="match status" value="1"/>
</dbReference>
<dbReference type="PROSITE" id="PS00152">
    <property type="entry name" value="ATPASE_ALPHA_BETA"/>
    <property type="match status" value="1"/>
</dbReference>
<accession>B3WDL8</accession>